<dbReference type="EC" id="2.1.2.1" evidence="1"/>
<dbReference type="EMBL" id="CP000261">
    <property type="protein sequence ID" value="ABF35993.1"/>
    <property type="molecule type" value="Genomic_DNA"/>
</dbReference>
<dbReference type="SMR" id="Q1JBR5"/>
<dbReference type="KEGG" id="spj:MGAS2096_Spy0941"/>
<dbReference type="HOGENOM" id="CLU_022477_2_1_9"/>
<dbReference type="UniPathway" id="UPA00193"/>
<dbReference type="UniPathway" id="UPA00288">
    <property type="reaction ID" value="UER01023"/>
</dbReference>
<dbReference type="GO" id="GO:0005829">
    <property type="term" value="C:cytosol"/>
    <property type="evidence" value="ECO:0007669"/>
    <property type="project" value="TreeGrafter"/>
</dbReference>
<dbReference type="GO" id="GO:0004372">
    <property type="term" value="F:glycine hydroxymethyltransferase activity"/>
    <property type="evidence" value="ECO:0007669"/>
    <property type="project" value="UniProtKB-UniRule"/>
</dbReference>
<dbReference type="GO" id="GO:0030170">
    <property type="term" value="F:pyridoxal phosphate binding"/>
    <property type="evidence" value="ECO:0007669"/>
    <property type="project" value="UniProtKB-UniRule"/>
</dbReference>
<dbReference type="GO" id="GO:0019264">
    <property type="term" value="P:glycine biosynthetic process from serine"/>
    <property type="evidence" value="ECO:0007669"/>
    <property type="project" value="UniProtKB-UniRule"/>
</dbReference>
<dbReference type="GO" id="GO:0035999">
    <property type="term" value="P:tetrahydrofolate interconversion"/>
    <property type="evidence" value="ECO:0007669"/>
    <property type="project" value="UniProtKB-UniRule"/>
</dbReference>
<dbReference type="CDD" id="cd00378">
    <property type="entry name" value="SHMT"/>
    <property type="match status" value="1"/>
</dbReference>
<dbReference type="FunFam" id="3.40.640.10:FF:000001">
    <property type="entry name" value="Serine hydroxymethyltransferase"/>
    <property type="match status" value="1"/>
</dbReference>
<dbReference type="Gene3D" id="3.90.1150.10">
    <property type="entry name" value="Aspartate Aminotransferase, domain 1"/>
    <property type="match status" value="1"/>
</dbReference>
<dbReference type="Gene3D" id="3.40.640.10">
    <property type="entry name" value="Type I PLP-dependent aspartate aminotransferase-like (Major domain)"/>
    <property type="match status" value="1"/>
</dbReference>
<dbReference type="HAMAP" id="MF_00051">
    <property type="entry name" value="SHMT"/>
    <property type="match status" value="1"/>
</dbReference>
<dbReference type="InterPro" id="IPR015424">
    <property type="entry name" value="PyrdxlP-dep_Trfase"/>
</dbReference>
<dbReference type="InterPro" id="IPR015421">
    <property type="entry name" value="PyrdxlP-dep_Trfase_major"/>
</dbReference>
<dbReference type="InterPro" id="IPR015422">
    <property type="entry name" value="PyrdxlP-dep_Trfase_small"/>
</dbReference>
<dbReference type="InterPro" id="IPR001085">
    <property type="entry name" value="Ser_HO-MeTrfase"/>
</dbReference>
<dbReference type="InterPro" id="IPR049943">
    <property type="entry name" value="Ser_HO-MeTrfase-like"/>
</dbReference>
<dbReference type="InterPro" id="IPR019798">
    <property type="entry name" value="Ser_HO-MeTrfase_PLP_BS"/>
</dbReference>
<dbReference type="InterPro" id="IPR039429">
    <property type="entry name" value="SHMT-like_dom"/>
</dbReference>
<dbReference type="NCBIfam" id="NF000586">
    <property type="entry name" value="PRK00011.1"/>
    <property type="match status" value="1"/>
</dbReference>
<dbReference type="PANTHER" id="PTHR11680">
    <property type="entry name" value="SERINE HYDROXYMETHYLTRANSFERASE"/>
    <property type="match status" value="1"/>
</dbReference>
<dbReference type="PANTHER" id="PTHR11680:SF35">
    <property type="entry name" value="SERINE HYDROXYMETHYLTRANSFERASE 1"/>
    <property type="match status" value="1"/>
</dbReference>
<dbReference type="Pfam" id="PF00464">
    <property type="entry name" value="SHMT"/>
    <property type="match status" value="1"/>
</dbReference>
<dbReference type="PIRSF" id="PIRSF000412">
    <property type="entry name" value="SHMT"/>
    <property type="match status" value="1"/>
</dbReference>
<dbReference type="SUPFAM" id="SSF53383">
    <property type="entry name" value="PLP-dependent transferases"/>
    <property type="match status" value="1"/>
</dbReference>
<dbReference type="PROSITE" id="PS00096">
    <property type="entry name" value="SHMT"/>
    <property type="match status" value="1"/>
</dbReference>
<accession>Q1JBR5</accession>
<comment type="function">
    <text evidence="1">Catalyzes the reversible interconversion of serine and glycine with tetrahydrofolate (THF) serving as the one-carbon carrier. This reaction serves as the major source of one-carbon groups required for the biosynthesis of purines, thymidylate, methionine, and other important biomolecules. Also exhibits THF-independent aldolase activity toward beta-hydroxyamino acids, producing glycine and aldehydes, via a retro-aldol mechanism.</text>
</comment>
<comment type="catalytic activity">
    <reaction evidence="1">
        <text>(6R)-5,10-methylene-5,6,7,8-tetrahydrofolate + glycine + H2O = (6S)-5,6,7,8-tetrahydrofolate + L-serine</text>
        <dbReference type="Rhea" id="RHEA:15481"/>
        <dbReference type="ChEBI" id="CHEBI:15377"/>
        <dbReference type="ChEBI" id="CHEBI:15636"/>
        <dbReference type="ChEBI" id="CHEBI:33384"/>
        <dbReference type="ChEBI" id="CHEBI:57305"/>
        <dbReference type="ChEBI" id="CHEBI:57453"/>
        <dbReference type="EC" id="2.1.2.1"/>
    </reaction>
</comment>
<comment type="cofactor">
    <cofactor evidence="1">
        <name>pyridoxal 5'-phosphate</name>
        <dbReference type="ChEBI" id="CHEBI:597326"/>
    </cofactor>
</comment>
<comment type="pathway">
    <text evidence="1">One-carbon metabolism; tetrahydrofolate interconversion.</text>
</comment>
<comment type="pathway">
    <text evidence="1">Amino-acid biosynthesis; glycine biosynthesis; glycine from L-serine: step 1/1.</text>
</comment>
<comment type="subunit">
    <text evidence="1">Homodimer.</text>
</comment>
<comment type="subcellular location">
    <subcellularLocation>
        <location evidence="1">Cytoplasm</location>
    </subcellularLocation>
</comment>
<comment type="similarity">
    <text evidence="1">Belongs to the SHMT family.</text>
</comment>
<protein>
    <recommendedName>
        <fullName evidence="1">Serine hydroxymethyltransferase</fullName>
        <shortName evidence="1">SHMT</shortName>
        <shortName evidence="1">Serine methylase</shortName>
        <ecNumber evidence="1">2.1.2.1</ecNumber>
    </recommendedName>
</protein>
<sequence length="420" mass="45320">MTMIFDKGNVEDFDKELWDAIHAEEERQEHHIELIASENMVSKAVMAAQGSVLTNKYAEGYPGNRYYGGTECVDIVETLAIERAKKLFGAAFANVQAHSGSQANAAAYMALIEAGDTVLGMDLAAGGHLTHGSPVNFSGKTYHFVGYSVDADTEMLNYEAILEQAKAVQPKLIVAGASAYSRSIDFEKFRAIADHVGAYLMVDMAHIAGLVAAGVHPSPVHYAHIVTSTTHKTLRGPRGGLILTNDEALAKKINSAVFPGLQGGPLEHVIAAKAVAFKEALDPAFKDYAQAIIDNTAAMAAVFAQDDRFRLISGGTDNHVFLVDVTKVIANGKLAQNLLDEVNITLNKNAIPFETLSPFKTSGIRIGCAAITSRGMGVKESQTIAHLIIKALVNHDQETILEEVRQEVRQLTDAFPLYKK</sequence>
<organism>
    <name type="scientific">Streptococcus pyogenes serotype M12 (strain MGAS2096)</name>
    <dbReference type="NCBI Taxonomy" id="370553"/>
    <lineage>
        <taxon>Bacteria</taxon>
        <taxon>Bacillati</taxon>
        <taxon>Bacillota</taxon>
        <taxon>Bacilli</taxon>
        <taxon>Lactobacillales</taxon>
        <taxon>Streptococcaceae</taxon>
        <taxon>Streptococcus</taxon>
    </lineage>
</organism>
<reference key="1">
    <citation type="journal article" date="2006" name="Proc. Natl. Acad. Sci. U.S.A.">
        <title>Molecular genetic anatomy of inter- and intraserotype variation in the human bacterial pathogen group A Streptococcus.</title>
        <authorList>
            <person name="Beres S.B."/>
            <person name="Richter E.W."/>
            <person name="Nagiec M.J."/>
            <person name="Sumby P."/>
            <person name="Porcella S.F."/>
            <person name="DeLeo F.R."/>
            <person name="Musser J.M."/>
        </authorList>
    </citation>
    <scope>NUCLEOTIDE SEQUENCE [LARGE SCALE GENOMIC DNA]</scope>
    <source>
        <strain>MGAS2096</strain>
    </source>
</reference>
<gene>
    <name evidence="1" type="primary">glyA</name>
    <name type="ordered locus">MGAS2096_Spy0941</name>
</gene>
<name>GLYA_STRPB</name>
<feature type="chain" id="PRO_1000006328" description="Serine hydroxymethyltransferase">
    <location>
        <begin position="1"/>
        <end position="420"/>
    </location>
</feature>
<feature type="binding site" evidence="1">
    <location>
        <position position="123"/>
    </location>
    <ligand>
        <name>(6S)-5,6,7,8-tetrahydrofolate</name>
        <dbReference type="ChEBI" id="CHEBI:57453"/>
    </ligand>
</feature>
<feature type="binding site" evidence="1">
    <location>
        <begin position="127"/>
        <end position="129"/>
    </location>
    <ligand>
        <name>(6S)-5,6,7,8-tetrahydrofolate</name>
        <dbReference type="ChEBI" id="CHEBI:57453"/>
    </ligand>
</feature>
<feature type="binding site" evidence="1">
    <location>
        <begin position="357"/>
        <end position="359"/>
    </location>
    <ligand>
        <name>(6S)-5,6,7,8-tetrahydrofolate</name>
        <dbReference type="ChEBI" id="CHEBI:57453"/>
    </ligand>
</feature>
<feature type="site" description="Plays an important role in substrate specificity" evidence="1">
    <location>
        <position position="231"/>
    </location>
</feature>
<feature type="modified residue" description="N6-(pyridoxal phosphate)lysine" evidence="1">
    <location>
        <position position="232"/>
    </location>
</feature>
<proteinExistence type="inferred from homology"/>
<evidence type="ECO:0000255" key="1">
    <source>
        <dbReference type="HAMAP-Rule" id="MF_00051"/>
    </source>
</evidence>
<keyword id="KW-0028">Amino-acid biosynthesis</keyword>
<keyword id="KW-0963">Cytoplasm</keyword>
<keyword id="KW-0554">One-carbon metabolism</keyword>
<keyword id="KW-0663">Pyridoxal phosphate</keyword>
<keyword id="KW-0808">Transferase</keyword>